<protein>
    <recommendedName>
        <fullName evidence="1">Translational regulator CsrA</fullName>
    </recommendedName>
    <alternativeName>
        <fullName evidence="1">Carbon storage regulator</fullName>
    </alternativeName>
</protein>
<reference key="1">
    <citation type="journal article" date="2007" name="Nat. Biotechnol.">
        <title>Genome sequence and identification of candidate vaccine antigens from the animal pathogen Dichelobacter nodosus.</title>
        <authorList>
            <person name="Myers G.S.A."/>
            <person name="Parker D."/>
            <person name="Al-Hasani K."/>
            <person name="Kennan R.M."/>
            <person name="Seemann T."/>
            <person name="Ren Q."/>
            <person name="Badger J.H."/>
            <person name="Selengut J.D."/>
            <person name="Deboy R.T."/>
            <person name="Tettelin H."/>
            <person name="Boyce J.D."/>
            <person name="McCarl V.P."/>
            <person name="Han X."/>
            <person name="Nelson W.C."/>
            <person name="Madupu R."/>
            <person name="Mohamoud Y."/>
            <person name="Holley T."/>
            <person name="Fedorova N."/>
            <person name="Khouri H."/>
            <person name="Bottomley S.P."/>
            <person name="Whittington R.J."/>
            <person name="Adler B."/>
            <person name="Songer J.G."/>
            <person name="Rood J.I."/>
            <person name="Paulsen I.T."/>
        </authorList>
    </citation>
    <scope>NUCLEOTIDE SEQUENCE [LARGE SCALE GENOMIC DNA]</scope>
    <source>
        <strain>VCS1703A</strain>
    </source>
</reference>
<accession>A5EWA3</accession>
<sequence length="64" mass="7240">MLILTRRVGETIIIDDQIKVTVLAVKGNQVRLGVQAPDEIAIHREEIYHRLMNGVGDDAEMEKK</sequence>
<keyword id="KW-0010">Activator</keyword>
<keyword id="KW-0963">Cytoplasm</keyword>
<keyword id="KW-1185">Reference proteome</keyword>
<keyword id="KW-0678">Repressor</keyword>
<keyword id="KW-0694">RNA-binding</keyword>
<keyword id="KW-0810">Translation regulation</keyword>
<comment type="function">
    <text evidence="1">A key translational regulator that binds mRNA to regulate translation initiation and/or mRNA stability. Mediates global changes in gene expression, shifting from rapid growth to stress survival by linking envelope stress, the stringent response and the catabolite repression systems. Usually binds in the 5'-UTR; binding at or near the Shine-Dalgarno sequence prevents ribosome-binding, repressing translation, binding elsewhere in the 5'-UTR can activate translation and/or stabilize the mRNA. Its function is antagonized by small RNA(s).</text>
</comment>
<comment type="subunit">
    <text evidence="1">Homodimer; the beta-strands of each monomer intercalate to form a hydrophobic core, while the alpha-helices form wings that extend away from the core.</text>
</comment>
<comment type="subcellular location">
    <subcellularLocation>
        <location evidence="1">Cytoplasm</location>
    </subcellularLocation>
</comment>
<comment type="similarity">
    <text evidence="1">Belongs to the CsrA/RsmA family.</text>
</comment>
<evidence type="ECO:0000255" key="1">
    <source>
        <dbReference type="HAMAP-Rule" id="MF_00167"/>
    </source>
</evidence>
<dbReference type="EMBL" id="CP000513">
    <property type="protein sequence ID" value="ABQ13329.1"/>
    <property type="molecule type" value="Genomic_DNA"/>
</dbReference>
<dbReference type="RefSeq" id="WP_012030628.1">
    <property type="nucleotide sequence ID" value="NC_009446.1"/>
</dbReference>
<dbReference type="SMR" id="A5EWA3"/>
<dbReference type="STRING" id="246195.DNO_0284"/>
<dbReference type="KEGG" id="dno:DNO_0284"/>
<dbReference type="eggNOG" id="COG1551">
    <property type="taxonomic scope" value="Bacteria"/>
</dbReference>
<dbReference type="HOGENOM" id="CLU_164837_2_1_6"/>
<dbReference type="OrthoDB" id="9809061at2"/>
<dbReference type="Proteomes" id="UP000000248">
    <property type="component" value="Chromosome"/>
</dbReference>
<dbReference type="GO" id="GO:0005829">
    <property type="term" value="C:cytosol"/>
    <property type="evidence" value="ECO:0007669"/>
    <property type="project" value="TreeGrafter"/>
</dbReference>
<dbReference type="GO" id="GO:0048027">
    <property type="term" value="F:mRNA 5'-UTR binding"/>
    <property type="evidence" value="ECO:0007669"/>
    <property type="project" value="UniProtKB-UniRule"/>
</dbReference>
<dbReference type="GO" id="GO:0006402">
    <property type="term" value="P:mRNA catabolic process"/>
    <property type="evidence" value="ECO:0007669"/>
    <property type="project" value="InterPro"/>
</dbReference>
<dbReference type="GO" id="GO:0045947">
    <property type="term" value="P:negative regulation of translational initiation"/>
    <property type="evidence" value="ECO:0007669"/>
    <property type="project" value="UniProtKB-UniRule"/>
</dbReference>
<dbReference type="GO" id="GO:0045948">
    <property type="term" value="P:positive regulation of translational initiation"/>
    <property type="evidence" value="ECO:0007669"/>
    <property type="project" value="UniProtKB-UniRule"/>
</dbReference>
<dbReference type="GO" id="GO:0006109">
    <property type="term" value="P:regulation of carbohydrate metabolic process"/>
    <property type="evidence" value="ECO:0007669"/>
    <property type="project" value="UniProtKB-UniRule"/>
</dbReference>
<dbReference type="FunFam" id="2.60.40.4380:FF:000002">
    <property type="entry name" value="Translational regulator CsrA"/>
    <property type="match status" value="1"/>
</dbReference>
<dbReference type="Gene3D" id="2.60.40.4380">
    <property type="entry name" value="Translational regulator CsrA"/>
    <property type="match status" value="1"/>
</dbReference>
<dbReference type="HAMAP" id="MF_00167">
    <property type="entry name" value="CsrA"/>
    <property type="match status" value="1"/>
</dbReference>
<dbReference type="InterPro" id="IPR003751">
    <property type="entry name" value="CsrA"/>
</dbReference>
<dbReference type="InterPro" id="IPR036107">
    <property type="entry name" value="CsrA_sf"/>
</dbReference>
<dbReference type="NCBIfam" id="TIGR00202">
    <property type="entry name" value="csrA"/>
    <property type="match status" value="1"/>
</dbReference>
<dbReference type="NCBIfam" id="NF002469">
    <property type="entry name" value="PRK01712.1"/>
    <property type="match status" value="1"/>
</dbReference>
<dbReference type="PANTHER" id="PTHR34984">
    <property type="entry name" value="CARBON STORAGE REGULATOR"/>
    <property type="match status" value="1"/>
</dbReference>
<dbReference type="PANTHER" id="PTHR34984:SF1">
    <property type="entry name" value="CARBON STORAGE REGULATOR"/>
    <property type="match status" value="1"/>
</dbReference>
<dbReference type="Pfam" id="PF02599">
    <property type="entry name" value="CsrA"/>
    <property type="match status" value="1"/>
</dbReference>
<dbReference type="SUPFAM" id="SSF117130">
    <property type="entry name" value="CsrA-like"/>
    <property type="match status" value="1"/>
</dbReference>
<feature type="chain" id="PRO_1000023379" description="Translational regulator CsrA">
    <location>
        <begin position="1"/>
        <end position="64"/>
    </location>
</feature>
<gene>
    <name evidence="1" type="primary">csrA</name>
    <name type="ordered locus">DNO_0284</name>
</gene>
<proteinExistence type="inferred from homology"/>
<name>CSRA_DICNV</name>
<organism>
    <name type="scientific">Dichelobacter nodosus (strain VCS1703A)</name>
    <dbReference type="NCBI Taxonomy" id="246195"/>
    <lineage>
        <taxon>Bacteria</taxon>
        <taxon>Pseudomonadati</taxon>
        <taxon>Pseudomonadota</taxon>
        <taxon>Gammaproteobacteria</taxon>
        <taxon>Cardiobacteriales</taxon>
        <taxon>Cardiobacteriaceae</taxon>
        <taxon>Dichelobacter</taxon>
    </lineage>
</organism>